<feature type="chain" id="PRO_0000118365" description="NAD(P)H-quinone oxidoreductase chain 6">
    <location>
        <begin position="1"/>
        <end position="202"/>
    </location>
</feature>
<feature type="transmembrane region" description="Helical" evidence="2">
    <location>
        <begin position="9"/>
        <end position="29"/>
    </location>
</feature>
<feature type="transmembrane region" description="Helical" evidence="2">
    <location>
        <begin position="32"/>
        <end position="52"/>
    </location>
</feature>
<feature type="transmembrane region" description="Helical" evidence="2">
    <location>
        <begin position="61"/>
        <end position="81"/>
    </location>
</feature>
<feature type="transmembrane region" description="Helical" evidence="2">
    <location>
        <begin position="98"/>
        <end position="118"/>
    </location>
</feature>
<feature type="transmembrane region" description="Helical" evidence="2">
    <location>
        <begin position="144"/>
        <end position="164"/>
    </location>
</feature>
<feature type="sequence conflict" description="In Ref. 1; CAB44670." evidence="3" ref="1">
    <original>S</original>
    <variation>P</variation>
    <location>
        <position position="11"/>
    </location>
</feature>
<feature type="sequence conflict" description="In Ref. 1; CAB44670." evidence="3" ref="1">
    <original>T</original>
    <variation>P</variation>
    <location>
        <position position="22"/>
    </location>
</feature>
<feature type="sequence conflict" description="In Ref. 1; CAB44670." evidence="3" ref="1">
    <original>SGLPQ</original>
    <variation>IWLTS</variation>
    <location>
        <begin position="177"/>
        <end position="181"/>
    </location>
</feature>
<proteinExistence type="inferred from homology"/>
<evidence type="ECO:0000250" key="1"/>
<evidence type="ECO:0000255" key="2"/>
<evidence type="ECO:0000305" key="3"/>
<keyword id="KW-0472">Membrane</keyword>
<keyword id="KW-0520">NAD</keyword>
<keyword id="KW-0521">NADP</keyword>
<keyword id="KW-0618">Plastoquinone</keyword>
<keyword id="KW-0874">Quinone</keyword>
<keyword id="KW-1185">Reference proteome</keyword>
<keyword id="KW-1278">Translocase</keyword>
<keyword id="KW-0812">Transmembrane</keyword>
<keyword id="KW-1133">Transmembrane helix</keyword>
<gene>
    <name type="primary">ndhG</name>
    <name type="ordered locus">alr0225</name>
</gene>
<comment type="function">
    <text evidence="1">NDH-1 shuttles electrons from NAD(P)H, via FMN and iron-sulfur (Fe-S) centers, to quinones in the respiratory chain. The immediate electron acceptor for the enzyme in this species is believed to be plastoquinone. Couples the redox reaction to proton translocation (for every two electrons transferred, four hydrogen ions are translocated across the cytoplasmic membrane), and thus conserves the redox energy in a proton gradient (By similarity).</text>
</comment>
<comment type="catalytic activity">
    <reaction>
        <text>a plastoquinone + NADH + (n+1) H(+)(in) = a plastoquinol + NAD(+) + n H(+)(out)</text>
        <dbReference type="Rhea" id="RHEA:42608"/>
        <dbReference type="Rhea" id="RHEA-COMP:9561"/>
        <dbReference type="Rhea" id="RHEA-COMP:9562"/>
        <dbReference type="ChEBI" id="CHEBI:15378"/>
        <dbReference type="ChEBI" id="CHEBI:17757"/>
        <dbReference type="ChEBI" id="CHEBI:57540"/>
        <dbReference type="ChEBI" id="CHEBI:57945"/>
        <dbReference type="ChEBI" id="CHEBI:62192"/>
    </reaction>
</comment>
<comment type="catalytic activity">
    <reaction>
        <text>a plastoquinone + NADPH + (n+1) H(+)(in) = a plastoquinol + NADP(+) + n H(+)(out)</text>
        <dbReference type="Rhea" id="RHEA:42612"/>
        <dbReference type="Rhea" id="RHEA-COMP:9561"/>
        <dbReference type="Rhea" id="RHEA-COMP:9562"/>
        <dbReference type="ChEBI" id="CHEBI:15378"/>
        <dbReference type="ChEBI" id="CHEBI:17757"/>
        <dbReference type="ChEBI" id="CHEBI:57783"/>
        <dbReference type="ChEBI" id="CHEBI:58349"/>
        <dbReference type="ChEBI" id="CHEBI:62192"/>
    </reaction>
</comment>
<comment type="subcellular location">
    <subcellularLocation>
        <location evidence="3">Membrane</location>
        <topology evidence="3">Multi-pass membrane protein</topology>
    </subcellularLocation>
</comment>
<comment type="similarity">
    <text evidence="3">Belongs to the complex I subunit 6 family.</text>
</comment>
<reference key="1">
    <citation type="submission" date="1999-06" db="EMBL/GenBank/DDBJ databases">
        <title>Isolation of the ndhAIGE gene cluster of Anabaena sp. PCC 7120.</title>
        <authorList>
            <person name="Schiefer W."/>
            <person name="Happe T."/>
        </authorList>
    </citation>
    <scope>NUCLEOTIDE SEQUENCE [GENOMIC DNA]</scope>
</reference>
<reference key="2">
    <citation type="journal article" date="2001" name="DNA Res.">
        <title>Complete genomic sequence of the filamentous nitrogen-fixing cyanobacterium Anabaena sp. strain PCC 7120.</title>
        <authorList>
            <person name="Kaneko T."/>
            <person name="Nakamura Y."/>
            <person name="Wolk C.P."/>
            <person name="Kuritz T."/>
            <person name="Sasamoto S."/>
            <person name="Watanabe A."/>
            <person name="Iriguchi M."/>
            <person name="Ishikawa A."/>
            <person name="Kawashima K."/>
            <person name="Kimura T."/>
            <person name="Kishida Y."/>
            <person name="Kohara M."/>
            <person name="Matsumoto M."/>
            <person name="Matsuno A."/>
            <person name="Muraki A."/>
            <person name="Nakazaki N."/>
            <person name="Shimpo S."/>
            <person name="Sugimoto M."/>
            <person name="Takazawa M."/>
            <person name="Yamada M."/>
            <person name="Yasuda M."/>
            <person name="Tabata S."/>
        </authorList>
    </citation>
    <scope>NUCLEOTIDE SEQUENCE [LARGE SCALE GENOMIC DNA]</scope>
    <source>
        <strain>PCC 7120 / SAG 25.82 / UTEX 2576</strain>
    </source>
</reference>
<name>NU6C_NOSS1</name>
<dbReference type="EC" id="7.1.1.-"/>
<dbReference type="EMBL" id="AJ242867">
    <property type="protein sequence ID" value="CAB44670.1"/>
    <property type="molecule type" value="Genomic_DNA"/>
</dbReference>
<dbReference type="EMBL" id="BA000019">
    <property type="protein sequence ID" value="BAB77749.1"/>
    <property type="molecule type" value="Genomic_DNA"/>
</dbReference>
<dbReference type="PIR" id="AI1834">
    <property type="entry name" value="AI1834"/>
</dbReference>
<dbReference type="RefSeq" id="WP_010994402.1">
    <property type="nucleotide sequence ID" value="NZ_RSCN01000026.1"/>
</dbReference>
<dbReference type="SMR" id="Q8Z075"/>
<dbReference type="STRING" id="103690.gene:10492232"/>
<dbReference type="KEGG" id="ana:alr0225"/>
<dbReference type="eggNOG" id="COG0839">
    <property type="taxonomic scope" value="Bacteria"/>
</dbReference>
<dbReference type="OrthoDB" id="510866at2"/>
<dbReference type="Proteomes" id="UP000002483">
    <property type="component" value="Chromosome"/>
</dbReference>
<dbReference type="GO" id="GO:1902495">
    <property type="term" value="C:transmembrane transporter complex"/>
    <property type="evidence" value="ECO:0007669"/>
    <property type="project" value="TreeGrafter"/>
</dbReference>
<dbReference type="GO" id="GO:0008137">
    <property type="term" value="F:NADH dehydrogenase (ubiquinone) activity"/>
    <property type="evidence" value="ECO:0007669"/>
    <property type="project" value="InterPro"/>
</dbReference>
<dbReference type="GO" id="GO:0048038">
    <property type="term" value="F:quinone binding"/>
    <property type="evidence" value="ECO:0007669"/>
    <property type="project" value="UniProtKB-KW"/>
</dbReference>
<dbReference type="Gene3D" id="1.20.120.1200">
    <property type="entry name" value="NADH-ubiquinone/plastoquinone oxidoreductase chain 6, subunit NuoJ"/>
    <property type="match status" value="1"/>
</dbReference>
<dbReference type="InterPro" id="IPR001457">
    <property type="entry name" value="NADH_UbQ/plastoQ_OxRdtase_su6"/>
</dbReference>
<dbReference type="InterPro" id="IPR042106">
    <property type="entry name" value="Nuo/plastoQ_OxRdtase_6_NuoJ"/>
</dbReference>
<dbReference type="NCBIfam" id="NF005163">
    <property type="entry name" value="PRK06638.1-3"/>
    <property type="match status" value="1"/>
</dbReference>
<dbReference type="PANTHER" id="PTHR33269">
    <property type="entry name" value="NADH-UBIQUINONE OXIDOREDUCTASE CHAIN 6"/>
    <property type="match status" value="1"/>
</dbReference>
<dbReference type="PANTHER" id="PTHR33269:SF17">
    <property type="entry name" value="NADH-UBIQUINONE OXIDOREDUCTASE CHAIN 6"/>
    <property type="match status" value="1"/>
</dbReference>
<dbReference type="Pfam" id="PF00499">
    <property type="entry name" value="Oxidored_q3"/>
    <property type="match status" value="1"/>
</dbReference>
<accession>Q8Z075</accession>
<accession>Q9WWM5</accession>
<protein>
    <recommendedName>
        <fullName>NAD(P)H-quinone oxidoreductase chain 6</fullName>
        <ecNumber>7.1.1.-</ecNumber>
    </recommendedName>
    <alternativeName>
        <fullName>NAD(P)H dehydrogenase I, chain 6</fullName>
    </alternativeName>
    <alternativeName>
        <fullName>NDH-1, chain 6</fullName>
    </alternativeName>
    <alternativeName>
        <fullName>NDH-G</fullName>
    </alternativeName>
</protein>
<organism>
    <name type="scientific">Nostoc sp. (strain PCC 7120 / SAG 25.82 / UTEX 2576)</name>
    <dbReference type="NCBI Taxonomy" id="103690"/>
    <lineage>
        <taxon>Bacteria</taxon>
        <taxon>Bacillati</taxon>
        <taxon>Cyanobacteriota</taxon>
        <taxon>Cyanophyceae</taxon>
        <taxon>Nostocales</taxon>
        <taxon>Nostocaceae</taxon>
        <taxon>Nostoc</taxon>
    </lineage>
</organism>
<sequence>MNLAEGVQVVSFGILATMLIGTALGVVLATSIVYSAFLLGGVFISIAGMYLLLNGDFVAAAQVLVYVGAVNVLILFAIMLVNKRQDFTPYPSAGIRKVLTAIVSVGLFALLSTMVLATPWAYSTTPKVGDGSIIVIGEHFFSDFLLPFELASVLLLMAMVGAIILARREYLPEVTPSGLPQTVLTLPERPRELVGAGSETQE</sequence>